<dbReference type="EMBL" id="GO033104">
    <property type="status" value="NOT_ANNOTATED_CDS"/>
    <property type="molecule type" value="mRNA"/>
</dbReference>
<dbReference type="SMR" id="P0DI58"/>
<dbReference type="GO" id="GO:0005886">
    <property type="term" value="C:plasma membrane"/>
    <property type="evidence" value="ECO:0007669"/>
    <property type="project" value="UniProtKB-SubCell"/>
</dbReference>
<dbReference type="InterPro" id="IPR006459">
    <property type="entry name" value="CASP/CASPL"/>
</dbReference>
<dbReference type="InterPro" id="IPR006702">
    <property type="entry name" value="CASP_dom"/>
</dbReference>
<dbReference type="InterPro" id="IPR044173">
    <property type="entry name" value="CASPL"/>
</dbReference>
<dbReference type="NCBIfam" id="TIGR01569">
    <property type="entry name" value="A_tha_TIGR01569"/>
    <property type="match status" value="1"/>
</dbReference>
<dbReference type="PANTHER" id="PTHR36488:SF12">
    <property type="entry name" value="CASP-LIKE PROTEIN"/>
    <property type="match status" value="1"/>
</dbReference>
<dbReference type="PANTHER" id="PTHR36488">
    <property type="entry name" value="CASP-LIKE PROTEIN 1U1"/>
    <property type="match status" value="1"/>
</dbReference>
<dbReference type="Pfam" id="PF04535">
    <property type="entry name" value="CASP_dom"/>
    <property type="match status" value="1"/>
</dbReference>
<feature type="chain" id="PRO_0000417777" description="CASP-like protein 2">
    <location>
        <begin position="1"/>
        <end position="187"/>
    </location>
</feature>
<feature type="topological domain" description="Cytoplasmic" evidence="2">
    <location>
        <begin position="1"/>
        <end position="24"/>
    </location>
</feature>
<feature type="transmembrane region" description="Helical" evidence="2">
    <location>
        <begin position="25"/>
        <end position="45"/>
    </location>
</feature>
<feature type="topological domain" description="Extracellular" evidence="2">
    <location>
        <begin position="46"/>
        <end position="72"/>
    </location>
</feature>
<feature type="transmembrane region" description="Helical" evidence="2">
    <location>
        <begin position="73"/>
        <end position="93"/>
    </location>
</feature>
<feature type="topological domain" description="Cytoplasmic" evidence="2">
    <location>
        <begin position="94"/>
        <end position="108"/>
    </location>
</feature>
<feature type="transmembrane region" description="Helical" evidence="2">
    <location>
        <begin position="109"/>
        <end position="129"/>
    </location>
</feature>
<feature type="topological domain" description="Extracellular" evidence="2">
    <location>
        <begin position="130"/>
        <end position="163"/>
    </location>
</feature>
<feature type="transmembrane region" description="Helical" evidence="2">
    <location>
        <begin position="164"/>
        <end position="184"/>
    </location>
</feature>
<feature type="topological domain" description="Cytoplasmic" evidence="2">
    <location>
        <begin position="185"/>
        <end position="187"/>
    </location>
</feature>
<name>CSPL2_LOTJA</name>
<comment type="subunit">
    <text evidence="1">Homodimer and heterodimers.</text>
</comment>
<comment type="subcellular location">
    <subcellularLocation>
        <location evidence="1">Cell membrane</location>
        <topology evidence="1">Multi-pass membrane protein</topology>
    </subcellularLocation>
</comment>
<comment type="similarity">
    <text evidence="3">Belongs to the Casparian strip membrane proteins (CASP) family.</text>
</comment>
<proteinExistence type="evidence at transcript level"/>
<accession>P0DI58</accession>
<protein>
    <recommendedName>
        <fullName>CASP-like protein 2</fullName>
        <shortName>LjCASP2</shortName>
    </recommendedName>
</protein>
<sequence length="187" mass="20322">MKVSAVETGEISQVSAPRKGMIRGLSIMDFILRIVAAIGTLGSALSTGTTRETLPFTTQFVKFRAVFDDLPTFVFFVTSNSIVCGYLVLSLALSFFHIIRRSSAAKSRILLVFLDTVMFGLLTTGAAAAGTIVYVSHYGNVNANWFPFCGQYNHFCERISGSLIGSFIAVVIFMIIILMSAVSISKH</sequence>
<organism>
    <name type="scientific">Lotus japonicus</name>
    <name type="common">Lotus corniculatus var. japonicus</name>
    <dbReference type="NCBI Taxonomy" id="34305"/>
    <lineage>
        <taxon>Eukaryota</taxon>
        <taxon>Viridiplantae</taxon>
        <taxon>Streptophyta</taxon>
        <taxon>Embryophyta</taxon>
        <taxon>Tracheophyta</taxon>
        <taxon>Spermatophyta</taxon>
        <taxon>Magnoliopsida</taxon>
        <taxon>eudicotyledons</taxon>
        <taxon>Gunneridae</taxon>
        <taxon>Pentapetalae</taxon>
        <taxon>rosids</taxon>
        <taxon>fabids</taxon>
        <taxon>Fabales</taxon>
        <taxon>Fabaceae</taxon>
        <taxon>Papilionoideae</taxon>
        <taxon>50 kb inversion clade</taxon>
        <taxon>NPAAA clade</taxon>
        <taxon>Hologalegina</taxon>
        <taxon>robinioid clade</taxon>
        <taxon>Loteae</taxon>
        <taxon>Lotus</taxon>
    </lineage>
</organism>
<reference key="1">
    <citation type="submission" date="2009-10" db="EMBL/GenBank/DDBJ databases">
        <title>Construction and analysis of normalized cDNA library from stressed or untreated underground tissues of Lotus japonicus.</title>
        <authorList>
            <person name="Chan A.P."/>
            <person name="Cheung F."/>
            <person name="Xiao Y."/>
            <person name="Town C.D."/>
        </authorList>
    </citation>
    <scope>NUCLEOTIDE SEQUENCE [LARGE SCALE MRNA]</scope>
    <source>
        <strain>cv. MG20</strain>
        <tissue>Root</tissue>
    </source>
</reference>
<reference key="2">
    <citation type="journal article" date="2014" name="Plant Physiol.">
        <title>Functional and evolutionary analysis of the CASPARIAN STRIP MEMBRANE DOMAIN PROTEIN family.</title>
        <authorList>
            <person name="Roppolo D."/>
            <person name="Boeckmann B."/>
            <person name="Pfister A."/>
            <person name="Boutet E."/>
            <person name="Rubio M.C."/>
            <person name="Denervaud-Tendon V."/>
            <person name="Vermeer J.E."/>
            <person name="Gheyselinck J."/>
            <person name="Xenarios I."/>
            <person name="Geldner N."/>
        </authorList>
    </citation>
    <scope>GENE FAMILY</scope>
    <scope>NOMENCLATURE</scope>
</reference>
<keyword id="KW-1003">Cell membrane</keyword>
<keyword id="KW-0472">Membrane</keyword>
<keyword id="KW-0812">Transmembrane</keyword>
<keyword id="KW-1133">Transmembrane helix</keyword>
<evidence type="ECO:0000250" key="1"/>
<evidence type="ECO:0000255" key="2"/>
<evidence type="ECO:0000305" key="3"/>